<protein>
    <recommendedName>
        <fullName>HTH-type transcriptional regulator cbl</fullName>
    </recommendedName>
</protein>
<organism>
    <name type="scientific">Klebsiella aerogenes</name>
    <name type="common">Enterobacter aerogenes</name>
    <dbReference type="NCBI Taxonomy" id="548"/>
    <lineage>
        <taxon>Bacteria</taxon>
        <taxon>Pseudomonadati</taxon>
        <taxon>Pseudomonadota</taxon>
        <taxon>Gammaproteobacteria</taxon>
        <taxon>Enterobacterales</taxon>
        <taxon>Enterobacteriaceae</taxon>
        <taxon>Klebsiella/Raoultella group</taxon>
        <taxon>Klebsiella</taxon>
    </lineage>
</organism>
<dbReference type="EMBL" id="L01114">
    <property type="protein sequence ID" value="AAA18174.1"/>
    <property type="molecule type" value="Genomic_DNA"/>
</dbReference>
<dbReference type="SMR" id="Q08598"/>
<dbReference type="STRING" id="548.EAG7_00768"/>
<dbReference type="GO" id="GO:0003700">
    <property type="term" value="F:DNA-binding transcription factor activity"/>
    <property type="evidence" value="ECO:0007669"/>
    <property type="project" value="InterPro"/>
</dbReference>
<dbReference type="GO" id="GO:0000976">
    <property type="term" value="F:transcription cis-regulatory region binding"/>
    <property type="evidence" value="ECO:0007669"/>
    <property type="project" value="TreeGrafter"/>
</dbReference>
<dbReference type="GO" id="GO:0019344">
    <property type="term" value="P:cysteine biosynthetic process"/>
    <property type="evidence" value="ECO:0007669"/>
    <property type="project" value="TreeGrafter"/>
</dbReference>
<dbReference type="FunFam" id="1.10.10.10:FF:000021">
    <property type="entry name" value="HTH-type transcriptional regulator CysB"/>
    <property type="match status" value="1"/>
</dbReference>
<dbReference type="Gene3D" id="3.40.190.10">
    <property type="entry name" value="Periplasmic binding protein-like II"/>
    <property type="match status" value="2"/>
</dbReference>
<dbReference type="Gene3D" id="1.10.10.10">
    <property type="entry name" value="Winged helix-like DNA-binding domain superfamily/Winged helix DNA-binding domain"/>
    <property type="match status" value="1"/>
</dbReference>
<dbReference type="InterPro" id="IPR005119">
    <property type="entry name" value="LysR_subst-bd"/>
</dbReference>
<dbReference type="InterPro" id="IPR000847">
    <property type="entry name" value="Tscrpt_reg_HTH_LysR"/>
</dbReference>
<dbReference type="InterPro" id="IPR036388">
    <property type="entry name" value="WH-like_DNA-bd_sf"/>
</dbReference>
<dbReference type="InterPro" id="IPR036390">
    <property type="entry name" value="WH_DNA-bd_sf"/>
</dbReference>
<dbReference type="NCBIfam" id="NF009324">
    <property type="entry name" value="PRK12679.1"/>
    <property type="match status" value="1"/>
</dbReference>
<dbReference type="PANTHER" id="PTHR30126">
    <property type="entry name" value="HTH-TYPE TRANSCRIPTIONAL REGULATOR"/>
    <property type="match status" value="1"/>
</dbReference>
<dbReference type="PANTHER" id="PTHR30126:SF6">
    <property type="entry name" value="HTH-TYPE TRANSCRIPTIONAL REGULATOR CYSB-RELATED"/>
    <property type="match status" value="1"/>
</dbReference>
<dbReference type="Pfam" id="PF00126">
    <property type="entry name" value="HTH_1"/>
    <property type="match status" value="1"/>
</dbReference>
<dbReference type="Pfam" id="PF03466">
    <property type="entry name" value="LysR_substrate"/>
    <property type="match status" value="1"/>
</dbReference>
<dbReference type="PRINTS" id="PR00039">
    <property type="entry name" value="HTHLYSR"/>
</dbReference>
<dbReference type="SUPFAM" id="SSF53850">
    <property type="entry name" value="Periplasmic binding protein-like II"/>
    <property type="match status" value="1"/>
</dbReference>
<dbReference type="SUPFAM" id="SSF46785">
    <property type="entry name" value="Winged helix' DNA-binding domain"/>
    <property type="match status" value="1"/>
</dbReference>
<dbReference type="PROSITE" id="PS50931">
    <property type="entry name" value="HTH_LYSR"/>
    <property type="match status" value="1"/>
</dbReference>
<accession>Q08598</accession>
<name>CBL_KLEAE</name>
<comment type="function">
    <text>May be an accessory regulatory protein within the cys regulon.</text>
</comment>
<comment type="similarity">
    <text evidence="2">Belongs to the LysR transcriptional regulatory family.</text>
</comment>
<gene>
    <name type="primary">cbl</name>
</gene>
<feature type="chain" id="PRO_0000105603" description="HTH-type transcriptional regulator cbl">
    <location>
        <begin position="1"/>
        <end position="316"/>
    </location>
</feature>
<feature type="domain" description="HTH lysR-type" evidence="1">
    <location>
        <begin position="1"/>
        <end position="59"/>
    </location>
</feature>
<feature type="DNA-binding region" description="H-T-H motif" evidence="1">
    <location>
        <begin position="19"/>
        <end position="38"/>
    </location>
</feature>
<keyword id="KW-0238">DNA-binding</keyword>
<keyword id="KW-0804">Transcription</keyword>
<keyword id="KW-0805">Transcription regulation</keyword>
<sequence length="316" mass="35703">MNFQQLKIIREAARQDYNLTEVANMLYTSQSGVSRHIRELEEELGIEIFIRRGKRLLGMTEPGKALLSIAERILNEASNVRRLADLFTNDASGVLTIATTHTQARYSLPPVIKAFRELFSDVRVELVQGTPQEIEALLHNGGADIGIASERLSNDPTLAAFPWFRWHHSLLVPKDHPLTQVSPLTLEAIARWPLITYRQGITGRSRIDEAFNRKGLMPDIVLSAQDSDVIKTYVELGLGVGLVAEQSGDAREADTFTRLDTRHLFDANTVWLGLKRGQLQRNYVWRFIELCNAGLSLDEIKRQAMEPEEVAIDYQI</sequence>
<reference key="1">
    <citation type="journal article" date="1993" name="J. Bacteriol.">
        <title>The nac (nitrogen assimilation control) gene from Klebsiella aerogenes.</title>
        <authorList>
            <person name="Schwacha A."/>
            <person name="Bender R.A."/>
        </authorList>
    </citation>
    <scope>NUCLEOTIDE SEQUENCE [GENOMIC DNA]</scope>
    <source>
        <strain>W70 / KC1043</strain>
    </source>
</reference>
<evidence type="ECO:0000255" key="1">
    <source>
        <dbReference type="PROSITE-ProRule" id="PRU00253"/>
    </source>
</evidence>
<evidence type="ECO:0000305" key="2"/>
<proteinExistence type="inferred from homology"/>